<dbReference type="EC" id="2.4.2.29" evidence="1"/>
<dbReference type="EMBL" id="FM211187">
    <property type="protein sequence ID" value="CAR69825.1"/>
    <property type="molecule type" value="Genomic_DNA"/>
</dbReference>
<dbReference type="RefSeq" id="WP_001285241.1">
    <property type="nucleotide sequence ID" value="NC_011900.1"/>
</dbReference>
<dbReference type="SMR" id="B8ZPB8"/>
<dbReference type="KEGG" id="sne:SPN23F20810"/>
<dbReference type="HOGENOM" id="CLU_022060_0_1_9"/>
<dbReference type="UniPathway" id="UPA00392"/>
<dbReference type="GO" id="GO:0005829">
    <property type="term" value="C:cytosol"/>
    <property type="evidence" value="ECO:0007669"/>
    <property type="project" value="TreeGrafter"/>
</dbReference>
<dbReference type="GO" id="GO:0046872">
    <property type="term" value="F:metal ion binding"/>
    <property type="evidence" value="ECO:0007669"/>
    <property type="project" value="UniProtKB-KW"/>
</dbReference>
<dbReference type="GO" id="GO:0008479">
    <property type="term" value="F:tRNA-guanosine(34) queuine transglycosylase activity"/>
    <property type="evidence" value="ECO:0007669"/>
    <property type="project" value="UniProtKB-UniRule"/>
</dbReference>
<dbReference type="GO" id="GO:0008616">
    <property type="term" value="P:queuosine biosynthetic process"/>
    <property type="evidence" value="ECO:0007669"/>
    <property type="project" value="UniProtKB-UniRule"/>
</dbReference>
<dbReference type="GO" id="GO:0002099">
    <property type="term" value="P:tRNA wobble guanine modification"/>
    <property type="evidence" value="ECO:0007669"/>
    <property type="project" value="TreeGrafter"/>
</dbReference>
<dbReference type="GO" id="GO:0101030">
    <property type="term" value="P:tRNA-guanine transglycosylation"/>
    <property type="evidence" value="ECO:0007669"/>
    <property type="project" value="InterPro"/>
</dbReference>
<dbReference type="FunFam" id="3.20.20.105:FF:000001">
    <property type="entry name" value="Queuine tRNA-ribosyltransferase"/>
    <property type="match status" value="1"/>
</dbReference>
<dbReference type="Gene3D" id="3.20.20.105">
    <property type="entry name" value="Queuine tRNA-ribosyltransferase-like"/>
    <property type="match status" value="1"/>
</dbReference>
<dbReference type="HAMAP" id="MF_00168">
    <property type="entry name" value="Q_tRNA_Tgt"/>
    <property type="match status" value="1"/>
</dbReference>
<dbReference type="InterPro" id="IPR050076">
    <property type="entry name" value="ArchSynthase1/Queuine_TRR"/>
</dbReference>
<dbReference type="InterPro" id="IPR004803">
    <property type="entry name" value="TGT"/>
</dbReference>
<dbReference type="InterPro" id="IPR036511">
    <property type="entry name" value="TGT-like_sf"/>
</dbReference>
<dbReference type="InterPro" id="IPR002616">
    <property type="entry name" value="tRNA_ribo_trans-like"/>
</dbReference>
<dbReference type="NCBIfam" id="TIGR00430">
    <property type="entry name" value="Q_tRNA_tgt"/>
    <property type="match status" value="1"/>
</dbReference>
<dbReference type="NCBIfam" id="TIGR00449">
    <property type="entry name" value="tgt_general"/>
    <property type="match status" value="1"/>
</dbReference>
<dbReference type="PANTHER" id="PTHR46499">
    <property type="entry name" value="QUEUINE TRNA-RIBOSYLTRANSFERASE"/>
    <property type="match status" value="1"/>
</dbReference>
<dbReference type="PANTHER" id="PTHR46499:SF1">
    <property type="entry name" value="QUEUINE TRNA-RIBOSYLTRANSFERASE"/>
    <property type="match status" value="1"/>
</dbReference>
<dbReference type="Pfam" id="PF01702">
    <property type="entry name" value="TGT"/>
    <property type="match status" value="1"/>
</dbReference>
<dbReference type="SUPFAM" id="SSF51713">
    <property type="entry name" value="tRNA-guanine transglycosylase"/>
    <property type="match status" value="1"/>
</dbReference>
<name>TGT_STRPJ</name>
<proteinExistence type="inferred from homology"/>
<comment type="function">
    <text evidence="1">Catalyzes the base-exchange of a guanine (G) residue with the queuine precursor 7-aminomethyl-7-deazaguanine (PreQ1) at position 34 (anticodon wobble position) in tRNAs with GU(N) anticodons (tRNA-Asp, -Asn, -His and -Tyr). Catalysis occurs through a double-displacement mechanism. The nucleophile active site attacks the C1' of nucleotide 34 to detach the guanine base from the RNA, forming a covalent enzyme-RNA intermediate. The proton acceptor active site deprotonates the incoming PreQ1, allowing a nucleophilic attack on the C1' of the ribose to form the product. After dissociation, two additional enzymatic reactions on the tRNA convert PreQ1 to queuine (Q), resulting in the hypermodified nucleoside queuosine (7-(((4,5-cis-dihydroxy-2-cyclopenten-1-yl)amino)methyl)-7-deazaguanosine).</text>
</comment>
<comment type="catalytic activity">
    <reaction evidence="1">
        <text>7-aminomethyl-7-carbaguanine + guanosine(34) in tRNA = 7-aminomethyl-7-carbaguanosine(34) in tRNA + guanine</text>
        <dbReference type="Rhea" id="RHEA:24104"/>
        <dbReference type="Rhea" id="RHEA-COMP:10341"/>
        <dbReference type="Rhea" id="RHEA-COMP:10342"/>
        <dbReference type="ChEBI" id="CHEBI:16235"/>
        <dbReference type="ChEBI" id="CHEBI:58703"/>
        <dbReference type="ChEBI" id="CHEBI:74269"/>
        <dbReference type="ChEBI" id="CHEBI:82833"/>
        <dbReference type="EC" id="2.4.2.29"/>
    </reaction>
</comment>
<comment type="cofactor">
    <cofactor evidence="1">
        <name>Zn(2+)</name>
        <dbReference type="ChEBI" id="CHEBI:29105"/>
    </cofactor>
    <text evidence="1">Binds 1 zinc ion per subunit.</text>
</comment>
<comment type="pathway">
    <text evidence="1">tRNA modification; tRNA-queuosine biosynthesis.</text>
</comment>
<comment type="subunit">
    <text evidence="1">Homodimer. Within each dimer, one monomer is responsible for RNA recognition and catalysis, while the other monomer binds to the replacement base PreQ1.</text>
</comment>
<comment type="similarity">
    <text evidence="1">Belongs to the queuine tRNA-ribosyltransferase family.</text>
</comment>
<protein>
    <recommendedName>
        <fullName evidence="1">Queuine tRNA-ribosyltransferase</fullName>
        <ecNumber evidence="1">2.4.2.29</ecNumber>
    </recommendedName>
    <alternativeName>
        <fullName evidence="1">Guanine insertion enzyme</fullName>
    </alternativeName>
    <alternativeName>
        <fullName evidence="1">tRNA-guanine transglycosylase</fullName>
    </alternativeName>
</protein>
<evidence type="ECO:0000255" key="1">
    <source>
        <dbReference type="HAMAP-Rule" id="MF_00168"/>
    </source>
</evidence>
<keyword id="KW-0328">Glycosyltransferase</keyword>
<keyword id="KW-0479">Metal-binding</keyword>
<keyword id="KW-0671">Queuosine biosynthesis</keyword>
<keyword id="KW-0808">Transferase</keyword>
<keyword id="KW-0819">tRNA processing</keyword>
<keyword id="KW-0862">Zinc</keyword>
<organism>
    <name type="scientific">Streptococcus pneumoniae (strain ATCC 700669 / Spain 23F-1)</name>
    <dbReference type="NCBI Taxonomy" id="561276"/>
    <lineage>
        <taxon>Bacteria</taxon>
        <taxon>Bacillati</taxon>
        <taxon>Bacillota</taxon>
        <taxon>Bacilli</taxon>
        <taxon>Lactobacillales</taxon>
        <taxon>Streptococcaceae</taxon>
        <taxon>Streptococcus</taxon>
    </lineage>
</organism>
<accession>B8ZPB8</accession>
<feature type="chain" id="PRO_1000198027" description="Queuine tRNA-ribosyltransferase">
    <location>
        <begin position="1"/>
        <end position="380"/>
    </location>
</feature>
<feature type="region of interest" description="RNA binding" evidence="1">
    <location>
        <begin position="251"/>
        <end position="257"/>
    </location>
</feature>
<feature type="region of interest" description="RNA binding; important for wobble base 34 recognition" evidence="1">
    <location>
        <begin position="275"/>
        <end position="279"/>
    </location>
</feature>
<feature type="active site" description="Proton acceptor" evidence="1">
    <location>
        <position position="96"/>
    </location>
</feature>
<feature type="active site" description="Nucleophile" evidence="1">
    <location>
        <position position="270"/>
    </location>
</feature>
<feature type="binding site" evidence="1">
    <location>
        <begin position="96"/>
        <end position="100"/>
    </location>
    <ligand>
        <name>substrate</name>
    </ligand>
</feature>
<feature type="binding site" evidence="1">
    <location>
        <position position="150"/>
    </location>
    <ligand>
        <name>substrate</name>
    </ligand>
</feature>
<feature type="binding site" evidence="1">
    <location>
        <position position="193"/>
    </location>
    <ligand>
        <name>substrate</name>
    </ligand>
</feature>
<feature type="binding site" evidence="1">
    <location>
        <position position="220"/>
    </location>
    <ligand>
        <name>substrate</name>
    </ligand>
</feature>
<feature type="binding site" evidence="1">
    <location>
        <position position="308"/>
    </location>
    <ligand>
        <name>Zn(2+)</name>
        <dbReference type="ChEBI" id="CHEBI:29105"/>
    </ligand>
</feature>
<feature type="binding site" evidence="1">
    <location>
        <position position="310"/>
    </location>
    <ligand>
        <name>Zn(2+)</name>
        <dbReference type="ChEBI" id="CHEBI:29105"/>
    </ligand>
</feature>
<feature type="binding site" evidence="1">
    <location>
        <position position="313"/>
    </location>
    <ligand>
        <name>Zn(2+)</name>
        <dbReference type="ChEBI" id="CHEBI:29105"/>
    </ligand>
</feature>
<feature type="binding site" evidence="1">
    <location>
        <position position="339"/>
    </location>
    <ligand>
        <name>Zn(2+)</name>
        <dbReference type="ChEBI" id="CHEBI:29105"/>
    </ligand>
</feature>
<sequence length="380" mass="43121">MSDSPIKYRLIKKEKHTGARLGEIITPHGTFPTPMFMPVGTQATVKTQSPEELKEMGSGIILSNTYHLWLRPGDELIARAGGLHKFMNWDQPILTDSGGFQVYSLADSRNITEEGVTFKNHLNGSKMFLSPEKAISIQNNLGSDIMMSFDECPQFYQPYDYVKKSIERTSRWAERGLKAHRRPHDQGLFGIVQGAGFEDLRRQSAHDLVSMDFSGYSIGGLAVGETHEEMNAVLDFTTQLLPENKPRYLMGVGAPDSLIDGVIRGVDMFDCVLPTRIARNGTCMTSQGRLVVKNAQFAEDFTPLDPECDCYTCNNYTRAYLRHLLKADETFGIRLTSYHNLYFLLNLMKQVRQAIMDDNLLEFREYFVEKYGYNKSGRNF</sequence>
<reference key="1">
    <citation type="journal article" date="2009" name="J. Bacteriol.">
        <title>Role of conjugative elements in the evolution of the multidrug-resistant pandemic clone Streptococcus pneumoniae Spain23F ST81.</title>
        <authorList>
            <person name="Croucher N.J."/>
            <person name="Walker D."/>
            <person name="Romero P."/>
            <person name="Lennard N."/>
            <person name="Paterson G.K."/>
            <person name="Bason N.C."/>
            <person name="Mitchell A.M."/>
            <person name="Quail M.A."/>
            <person name="Andrew P.W."/>
            <person name="Parkhill J."/>
            <person name="Bentley S.D."/>
            <person name="Mitchell T.J."/>
        </authorList>
    </citation>
    <scope>NUCLEOTIDE SEQUENCE [LARGE SCALE GENOMIC DNA]</scope>
    <source>
        <strain>ATCC 700669 / Spain 23F-1</strain>
    </source>
</reference>
<gene>
    <name evidence="1" type="primary">tgt</name>
    <name type="ordered locus">SPN23F20810</name>
</gene>